<sequence length="382" mass="41487">MSLNIFWFLPTHGDGKYLGTSEGARAVDHGYLQQIAQAADRLGFGGVLIPTGRSCEDSWLVAASLIPVTQHLKFLVALRPGIISPTVAARQAATLDRLSNGRALFNLVTGGDPDELAGDGLHLNHQERYEASVEFTRIWRKVLEGENVDYQGKHIQVKGAKLLYPPIQQPRPPLYFGGSSEAAQDLAAEQVELYLTWGEPPAAVAEKIAQVREKAAAQGREVRFGIRLHVIVRETNDEAWAAADRLISHLDDDTIARAQASLARFDSVGQQRMAALHGGNRDNLEVSPNLWAGVGLVRGGAGTALVGDGPTVAARVKEYADLGIDTFIFSGYPHLEESYRVAELLFPHLDVQRPEQPQTGGYVSPFGEMVANDILPKSVSQS</sequence>
<evidence type="ECO:0000255" key="1">
    <source>
        <dbReference type="HAMAP-Rule" id="MF_01229"/>
    </source>
</evidence>
<dbReference type="EC" id="1.14.14.5" evidence="1"/>
<dbReference type="EMBL" id="CP000949">
    <property type="protein sequence ID" value="ACA75450.1"/>
    <property type="molecule type" value="Genomic_DNA"/>
</dbReference>
<dbReference type="SMR" id="B1JEV9"/>
<dbReference type="STRING" id="390235.PputW619_4974"/>
<dbReference type="KEGG" id="ppw:PputW619_4974"/>
<dbReference type="eggNOG" id="COG2141">
    <property type="taxonomic scope" value="Bacteria"/>
</dbReference>
<dbReference type="HOGENOM" id="CLU_027853_1_0_6"/>
<dbReference type="OrthoDB" id="9814695at2"/>
<dbReference type="GO" id="GO:0008726">
    <property type="term" value="F:alkanesulfonate monooxygenase activity"/>
    <property type="evidence" value="ECO:0007669"/>
    <property type="project" value="UniProtKB-UniRule"/>
</dbReference>
<dbReference type="GO" id="GO:0046306">
    <property type="term" value="P:alkanesulfonate catabolic process"/>
    <property type="evidence" value="ECO:0007669"/>
    <property type="project" value="TreeGrafter"/>
</dbReference>
<dbReference type="CDD" id="cd01094">
    <property type="entry name" value="Alkanesulfonate_monoxygenase"/>
    <property type="match status" value="1"/>
</dbReference>
<dbReference type="FunFam" id="3.20.20.30:FF:000001">
    <property type="entry name" value="Alkanesulfonate monooxygenase"/>
    <property type="match status" value="1"/>
</dbReference>
<dbReference type="Gene3D" id="3.20.20.30">
    <property type="entry name" value="Luciferase-like domain"/>
    <property type="match status" value="1"/>
</dbReference>
<dbReference type="HAMAP" id="MF_01229">
    <property type="entry name" value="Alkanesulf_monooxygen"/>
    <property type="match status" value="1"/>
</dbReference>
<dbReference type="InterPro" id="IPR019911">
    <property type="entry name" value="Alkanesulphonate_mOase_FMN-dep"/>
</dbReference>
<dbReference type="InterPro" id="IPR011251">
    <property type="entry name" value="Luciferase-like_dom"/>
</dbReference>
<dbReference type="InterPro" id="IPR036661">
    <property type="entry name" value="Luciferase-like_sf"/>
</dbReference>
<dbReference type="InterPro" id="IPR050172">
    <property type="entry name" value="SsuD_RutA_monooxygenase"/>
</dbReference>
<dbReference type="NCBIfam" id="TIGR03565">
    <property type="entry name" value="alk_sulf_monoox"/>
    <property type="match status" value="1"/>
</dbReference>
<dbReference type="NCBIfam" id="NF001939">
    <property type="entry name" value="PRK00719.1"/>
    <property type="match status" value="1"/>
</dbReference>
<dbReference type="PANTHER" id="PTHR42847">
    <property type="entry name" value="ALKANESULFONATE MONOOXYGENASE"/>
    <property type="match status" value="1"/>
</dbReference>
<dbReference type="PANTHER" id="PTHR42847:SF4">
    <property type="entry name" value="ALKANESULFONATE MONOOXYGENASE-RELATED"/>
    <property type="match status" value="1"/>
</dbReference>
<dbReference type="Pfam" id="PF00296">
    <property type="entry name" value="Bac_luciferase"/>
    <property type="match status" value="1"/>
</dbReference>
<dbReference type="SUPFAM" id="SSF51679">
    <property type="entry name" value="Bacterial luciferase-like"/>
    <property type="match status" value="1"/>
</dbReference>
<gene>
    <name evidence="1" type="primary">ssuD</name>
    <name type="ordered locus">PputW619_4974</name>
</gene>
<accession>B1JEV9</accession>
<proteinExistence type="inferred from homology"/>
<keyword id="KW-0285">Flavoprotein</keyword>
<keyword id="KW-0288">FMN</keyword>
<keyword id="KW-0503">Monooxygenase</keyword>
<keyword id="KW-0560">Oxidoreductase</keyword>
<protein>
    <recommendedName>
        <fullName evidence="1">Alkanesulfonate monooxygenase</fullName>
        <ecNumber evidence="1">1.14.14.5</ecNumber>
    </recommendedName>
    <alternativeName>
        <fullName evidence="1">FMNH2-dependent aliphatic sulfonate monooxygenase</fullName>
    </alternativeName>
</protein>
<name>SSUD_PSEPW</name>
<feature type="chain" id="PRO_1000139626" description="Alkanesulfonate monooxygenase">
    <location>
        <begin position="1"/>
        <end position="382"/>
    </location>
</feature>
<organism>
    <name type="scientific">Pseudomonas putida (strain W619)</name>
    <dbReference type="NCBI Taxonomy" id="390235"/>
    <lineage>
        <taxon>Bacteria</taxon>
        <taxon>Pseudomonadati</taxon>
        <taxon>Pseudomonadota</taxon>
        <taxon>Gammaproteobacteria</taxon>
        <taxon>Pseudomonadales</taxon>
        <taxon>Pseudomonadaceae</taxon>
        <taxon>Pseudomonas</taxon>
    </lineage>
</organism>
<comment type="function">
    <text evidence="1">Catalyzes the desulfonation of aliphatic sulfonates.</text>
</comment>
<comment type="catalytic activity">
    <reaction evidence="1">
        <text>an alkanesulfonate + FMNH2 + O2 = an aldehyde + FMN + sulfite + H2O + 2 H(+)</text>
        <dbReference type="Rhea" id="RHEA:23064"/>
        <dbReference type="ChEBI" id="CHEBI:15377"/>
        <dbReference type="ChEBI" id="CHEBI:15378"/>
        <dbReference type="ChEBI" id="CHEBI:15379"/>
        <dbReference type="ChEBI" id="CHEBI:17359"/>
        <dbReference type="ChEBI" id="CHEBI:17478"/>
        <dbReference type="ChEBI" id="CHEBI:57618"/>
        <dbReference type="ChEBI" id="CHEBI:58210"/>
        <dbReference type="ChEBI" id="CHEBI:134249"/>
        <dbReference type="EC" id="1.14.14.5"/>
    </reaction>
</comment>
<comment type="similarity">
    <text evidence="1">Belongs to the SsuD family.</text>
</comment>
<reference key="1">
    <citation type="submission" date="2008-02" db="EMBL/GenBank/DDBJ databases">
        <title>Complete sequence of Pseudomonas putida W619.</title>
        <authorList>
            <person name="Copeland A."/>
            <person name="Lucas S."/>
            <person name="Lapidus A."/>
            <person name="Barry K."/>
            <person name="Detter J.C."/>
            <person name="Glavina del Rio T."/>
            <person name="Dalin E."/>
            <person name="Tice H."/>
            <person name="Pitluck S."/>
            <person name="Chain P."/>
            <person name="Malfatti S."/>
            <person name="Shin M."/>
            <person name="Vergez L."/>
            <person name="Schmutz J."/>
            <person name="Larimer F."/>
            <person name="Land M."/>
            <person name="Hauser L."/>
            <person name="Kyrpides N."/>
            <person name="Kim E."/>
            <person name="Taghavi S."/>
            <person name="Vangronsveld D."/>
            <person name="van der Lelie D."/>
            <person name="Richardson P."/>
        </authorList>
    </citation>
    <scope>NUCLEOTIDE SEQUENCE [LARGE SCALE GENOMIC DNA]</scope>
    <source>
        <strain>W619</strain>
    </source>
</reference>